<dbReference type="EMBL" id="U17246">
    <property type="protein sequence ID" value="AAB67474.1"/>
    <property type="molecule type" value="Genomic_DNA"/>
</dbReference>
<dbReference type="EMBL" id="BK006945">
    <property type="protein sequence ID" value="DAA09503.1"/>
    <property type="molecule type" value="Genomic_DNA"/>
</dbReference>
<dbReference type="PIR" id="S51428">
    <property type="entry name" value="S51428"/>
</dbReference>
<dbReference type="RefSeq" id="NP_013284.1">
    <property type="nucleotide sequence ID" value="NM_001182070.1"/>
</dbReference>
<dbReference type="BioGRID" id="31454">
    <property type="interactions" value="71"/>
</dbReference>
<dbReference type="DIP" id="DIP-4800N"/>
<dbReference type="FunCoup" id="Q06266">
    <property type="interactions" value="502"/>
</dbReference>
<dbReference type="IntAct" id="Q06266">
    <property type="interactions" value="6"/>
</dbReference>
<dbReference type="STRING" id="4932.YLR183C"/>
<dbReference type="iPTMnet" id="Q06266"/>
<dbReference type="PaxDb" id="4932-YLR183C"/>
<dbReference type="PeptideAtlas" id="Q06266"/>
<dbReference type="EnsemblFungi" id="YLR183C_mRNA">
    <property type="protein sequence ID" value="YLR183C"/>
    <property type="gene ID" value="YLR183C"/>
</dbReference>
<dbReference type="GeneID" id="850880"/>
<dbReference type="KEGG" id="sce:YLR183C"/>
<dbReference type="AGR" id="SGD:S000004173"/>
<dbReference type="SGD" id="S000004173">
    <property type="gene designation" value="TOS4"/>
</dbReference>
<dbReference type="VEuPathDB" id="FungiDB:YLR183C"/>
<dbReference type="eggNOG" id="ENOG502RZJP">
    <property type="taxonomic scope" value="Eukaryota"/>
</dbReference>
<dbReference type="GeneTree" id="ENSGT00940000176669"/>
<dbReference type="HOGENOM" id="CLU_027153_0_0_1"/>
<dbReference type="InParanoid" id="Q06266"/>
<dbReference type="OMA" id="FIAVHIT"/>
<dbReference type="OrthoDB" id="5348546at2759"/>
<dbReference type="BioCyc" id="YEAST:G3O-32307-MONOMER"/>
<dbReference type="BioGRID-ORCS" id="850880">
    <property type="hits" value="0 hits in 10 CRISPR screens"/>
</dbReference>
<dbReference type="PRO" id="PR:Q06266"/>
<dbReference type="Proteomes" id="UP000002311">
    <property type="component" value="Chromosome XII"/>
</dbReference>
<dbReference type="RNAct" id="Q06266">
    <property type="molecule type" value="protein"/>
</dbReference>
<dbReference type="GO" id="GO:0000785">
    <property type="term" value="C:chromatin"/>
    <property type="evidence" value="ECO:0000314"/>
    <property type="project" value="SGD"/>
</dbReference>
<dbReference type="GO" id="GO:0005737">
    <property type="term" value="C:cytoplasm"/>
    <property type="evidence" value="ECO:0007005"/>
    <property type="project" value="SGD"/>
</dbReference>
<dbReference type="GO" id="GO:0005739">
    <property type="term" value="C:mitochondrion"/>
    <property type="evidence" value="ECO:0007005"/>
    <property type="project" value="SGD"/>
</dbReference>
<dbReference type="GO" id="GO:0005634">
    <property type="term" value="C:nucleus"/>
    <property type="evidence" value="ECO:0000314"/>
    <property type="project" value="SGD"/>
</dbReference>
<dbReference type="GO" id="GO:0070210">
    <property type="term" value="C:Rpd3L-Expanded complex"/>
    <property type="evidence" value="ECO:0007005"/>
    <property type="project" value="SGD"/>
</dbReference>
<dbReference type="GO" id="GO:0003682">
    <property type="term" value="F:chromatin binding"/>
    <property type="evidence" value="ECO:0000314"/>
    <property type="project" value="SGD"/>
</dbReference>
<dbReference type="GO" id="GO:0006974">
    <property type="term" value="P:DNA damage response"/>
    <property type="evidence" value="ECO:0000316"/>
    <property type="project" value="SGD"/>
</dbReference>
<dbReference type="GO" id="GO:0010468">
    <property type="term" value="P:regulation of gene expression"/>
    <property type="evidence" value="ECO:0000315"/>
    <property type="project" value="SGD"/>
</dbReference>
<dbReference type="CDD" id="cd22699">
    <property type="entry name" value="FHA_PLM2-like"/>
    <property type="match status" value="1"/>
</dbReference>
<dbReference type="Gene3D" id="2.60.200.20">
    <property type="match status" value="1"/>
</dbReference>
<dbReference type="InterPro" id="IPR000253">
    <property type="entry name" value="FHA_dom"/>
</dbReference>
<dbReference type="InterPro" id="IPR008984">
    <property type="entry name" value="SMAD_FHA_dom_sf"/>
</dbReference>
<dbReference type="Pfam" id="PF00498">
    <property type="entry name" value="FHA"/>
    <property type="match status" value="1"/>
</dbReference>
<dbReference type="SMART" id="SM00240">
    <property type="entry name" value="FHA"/>
    <property type="match status" value="1"/>
</dbReference>
<dbReference type="SUPFAM" id="SSF49879">
    <property type="entry name" value="SMAD/FHA domain"/>
    <property type="match status" value="1"/>
</dbReference>
<dbReference type="PROSITE" id="PS50006">
    <property type="entry name" value="FHA_DOMAIN"/>
    <property type="match status" value="1"/>
</dbReference>
<reference key="1">
    <citation type="journal article" date="1997" name="Nature">
        <title>The nucleotide sequence of Saccharomyces cerevisiae chromosome XII.</title>
        <authorList>
            <person name="Johnston M."/>
            <person name="Hillier L.W."/>
            <person name="Riles L."/>
            <person name="Albermann K."/>
            <person name="Andre B."/>
            <person name="Ansorge W."/>
            <person name="Benes V."/>
            <person name="Brueckner M."/>
            <person name="Delius H."/>
            <person name="Dubois E."/>
            <person name="Duesterhoeft A."/>
            <person name="Entian K.-D."/>
            <person name="Floeth M."/>
            <person name="Goffeau A."/>
            <person name="Hebling U."/>
            <person name="Heumann K."/>
            <person name="Heuss-Neitzel D."/>
            <person name="Hilbert H."/>
            <person name="Hilger F."/>
            <person name="Kleine K."/>
            <person name="Koetter P."/>
            <person name="Louis E.J."/>
            <person name="Messenguy F."/>
            <person name="Mewes H.-W."/>
            <person name="Miosga T."/>
            <person name="Moestl D."/>
            <person name="Mueller-Auer S."/>
            <person name="Nentwich U."/>
            <person name="Obermaier B."/>
            <person name="Piravandi E."/>
            <person name="Pohl T.M."/>
            <person name="Portetelle D."/>
            <person name="Purnelle B."/>
            <person name="Rechmann S."/>
            <person name="Rieger M."/>
            <person name="Rinke M."/>
            <person name="Rose M."/>
            <person name="Scharfe M."/>
            <person name="Scherens B."/>
            <person name="Scholler P."/>
            <person name="Schwager C."/>
            <person name="Schwarz S."/>
            <person name="Underwood A.P."/>
            <person name="Urrestarazu L.A."/>
            <person name="Vandenbol M."/>
            <person name="Verhasselt P."/>
            <person name="Vierendeels F."/>
            <person name="Voet M."/>
            <person name="Volckaert G."/>
            <person name="Voss H."/>
            <person name="Wambutt R."/>
            <person name="Wedler E."/>
            <person name="Wedler H."/>
            <person name="Zimmermann F.K."/>
            <person name="Zollner A."/>
            <person name="Hani J."/>
            <person name="Hoheisel J.D."/>
        </authorList>
    </citation>
    <scope>NUCLEOTIDE SEQUENCE [LARGE SCALE GENOMIC DNA]</scope>
    <source>
        <strain>ATCC 204508 / S288c</strain>
    </source>
</reference>
<reference key="2">
    <citation type="journal article" date="2014" name="G3 (Bethesda)">
        <title>The reference genome sequence of Saccharomyces cerevisiae: Then and now.</title>
        <authorList>
            <person name="Engel S.R."/>
            <person name="Dietrich F.S."/>
            <person name="Fisk D.G."/>
            <person name="Binkley G."/>
            <person name="Balakrishnan R."/>
            <person name="Costanzo M.C."/>
            <person name="Dwight S.S."/>
            <person name="Hitz B.C."/>
            <person name="Karra K."/>
            <person name="Nash R.S."/>
            <person name="Weng S."/>
            <person name="Wong E.D."/>
            <person name="Lloyd P."/>
            <person name="Skrzypek M.S."/>
            <person name="Miyasato S.R."/>
            <person name="Simison M."/>
            <person name="Cherry J.M."/>
        </authorList>
    </citation>
    <scope>GENOME REANNOTATION</scope>
    <source>
        <strain>ATCC 204508 / S288c</strain>
    </source>
</reference>
<reference key="3">
    <citation type="journal article" date="2001" name="Nature">
        <title>Genomic binding sites of the yeast cell-cycle transcription factors SBF and MBF.</title>
        <authorList>
            <person name="Iyer V.R."/>
            <person name="Horak C.E."/>
            <person name="Scafe C.S."/>
            <person name="Botstein D."/>
            <person name="Snyder M."/>
            <person name="Brown P.O."/>
        </authorList>
    </citation>
    <scope>INDUCTION</scope>
</reference>
<reference key="4">
    <citation type="journal article" date="2002" name="Genes Dev.">
        <title>Complex transcriptional circuitry at the G1/S transition in Saccharomyces cerevisiae.</title>
        <authorList>
            <person name="Horak C.E."/>
            <person name="Luscombe N.M."/>
            <person name="Qian J."/>
            <person name="Bertone P."/>
            <person name="Piccirrillo S."/>
            <person name="Gerstein M."/>
            <person name="Snyder M."/>
        </authorList>
    </citation>
    <scope>FUNCTION</scope>
    <scope>INDUCTION</scope>
</reference>
<reference key="5">
    <citation type="journal article" date="2003" name="Nature">
        <title>Global analysis of protein expression in yeast.</title>
        <authorList>
            <person name="Ghaemmaghami S."/>
            <person name="Huh W.-K."/>
            <person name="Bower K."/>
            <person name="Howson R.W."/>
            <person name="Belle A."/>
            <person name="Dephoure N."/>
            <person name="O'Shea E.K."/>
            <person name="Weissman J.S."/>
        </authorList>
    </citation>
    <scope>LEVEL OF PROTEIN EXPRESSION [LARGE SCALE ANALYSIS]</scope>
</reference>
<reference key="6">
    <citation type="journal article" date="2003" name="Nature">
        <title>Targets of the cyclin-dependent kinase Cdk1.</title>
        <authorList>
            <person name="Ubersax J.A."/>
            <person name="Woodbury E.L."/>
            <person name="Quang P.N."/>
            <person name="Paraz M."/>
            <person name="Blethrow J.D."/>
            <person name="Shah K."/>
            <person name="Shokat K.M."/>
            <person name="Morgan D.O."/>
        </authorList>
    </citation>
    <scope>PHOSPHORYLATION BY CDC28</scope>
</reference>
<reference key="7">
    <citation type="journal article" date="2004" name="Yeast">
        <title>Localization of proteins that are coordinately expressed with Cln2 during the cell cycle.</title>
        <authorList>
            <person name="Sundin B.A."/>
            <person name="Chiu C.-H."/>
            <person name="Riffle M."/>
            <person name="Davis T.N."/>
            <person name="Muller E.G.D."/>
        </authorList>
    </citation>
    <scope>SUBCELLULAR LOCATION</scope>
    <scope>INDUCTION</scope>
</reference>
<reference key="8">
    <citation type="journal article" date="2005" name="Genetics">
        <title>High functional overlap between MluI cell-cycle box binding factor and Swi4/6 cell-cycle box binding factor in the G1/S transcriptional program in Saccharomyces cerevisiae.</title>
        <authorList>
            <person name="Bean J.M."/>
            <person name="Siggia E.D."/>
            <person name="Cross F.R."/>
        </authorList>
    </citation>
    <scope>INDUCTION</scope>
</reference>
<reference key="9">
    <citation type="journal article" date="2007" name="Proc. Natl. Acad. Sci. U.S.A.">
        <title>Analysis of phosphorylation sites on proteins from Saccharomyces cerevisiae by electron transfer dissociation (ETD) mass spectrometry.</title>
        <authorList>
            <person name="Chi A."/>
            <person name="Huttenhower C."/>
            <person name="Geer L.Y."/>
            <person name="Coon J.J."/>
            <person name="Syka J.E.P."/>
            <person name="Bai D.L."/>
            <person name="Shabanowitz J."/>
            <person name="Burke D.J."/>
            <person name="Troyanskaya O.G."/>
            <person name="Hunt D.F."/>
        </authorList>
    </citation>
    <scope>PHOSPHORYLATION [LARGE SCALE ANALYSIS] AT SER-100</scope>
    <scope>IDENTIFICATION BY MASS SPECTROMETRY [LARGE SCALE ANALYSIS]</scope>
</reference>
<reference key="10">
    <citation type="journal article" date="2008" name="Mol. Cell. Proteomics">
        <title>A multidimensional chromatography technology for in-depth phosphoproteome analysis.</title>
        <authorList>
            <person name="Albuquerque C.P."/>
            <person name="Smolka M.B."/>
            <person name="Payne S.H."/>
            <person name="Bafna V."/>
            <person name="Eng J."/>
            <person name="Zhou H."/>
        </authorList>
    </citation>
    <scope>PHOSPHORYLATION [LARGE SCALE ANALYSIS] AT SER-40</scope>
    <scope>IDENTIFICATION BY MASS SPECTROMETRY [LARGE SCALE ANALYSIS]</scope>
</reference>
<keyword id="KW-0539">Nucleus</keyword>
<keyword id="KW-0597">Phosphoprotein</keyword>
<keyword id="KW-1185">Reference proteome</keyword>
<accession>Q06266</accession>
<accession>D6VYI7</accession>
<name>TOS4_YEAST</name>
<comment type="function">
    <text evidence="4">Binds to the promoters of genes with functions important for the G1/S (start) transition; primarily genes involved in pheromone response, polarized growth and transcription.</text>
</comment>
<comment type="subcellular location">
    <subcellularLocation>
        <location evidence="7">Nucleus</location>
    </subcellularLocation>
</comment>
<comment type="induction">
    <text evidence="3 4 7 8">Regulated in a cell cycle-dependent manner, peaking in G1 phase. Appears exclusively during the G1 and S phases (at protein level). Negatively regulated by transcription factor SBF (SWI4-SWI6 cell-cycle box binding factor).</text>
</comment>
<comment type="PTM">
    <text evidence="6">Phosphorylated by CDC28.</text>
</comment>
<comment type="miscellaneous">
    <text evidence="5">Present with 284 molecules/cell in log phase SD medium.</text>
</comment>
<comment type="similarity">
    <text evidence="9">Belongs to the PLM2/TOS4 family.</text>
</comment>
<protein>
    <recommendedName>
        <fullName>Protein TOS4</fullName>
    </recommendedName>
    <alternativeName>
        <fullName>Target of SBF protein 4</fullName>
    </alternativeName>
</protein>
<evidence type="ECO:0000255" key="1">
    <source>
        <dbReference type="PROSITE-ProRule" id="PRU00086"/>
    </source>
</evidence>
<evidence type="ECO:0000256" key="2">
    <source>
        <dbReference type="SAM" id="MobiDB-lite"/>
    </source>
</evidence>
<evidence type="ECO:0000269" key="3">
    <source>
    </source>
</evidence>
<evidence type="ECO:0000269" key="4">
    <source>
    </source>
</evidence>
<evidence type="ECO:0000269" key="5">
    <source>
    </source>
</evidence>
<evidence type="ECO:0000269" key="6">
    <source>
    </source>
</evidence>
<evidence type="ECO:0000269" key="7">
    <source>
    </source>
</evidence>
<evidence type="ECO:0000269" key="8">
    <source>
    </source>
</evidence>
<evidence type="ECO:0000305" key="9"/>
<evidence type="ECO:0007744" key="10">
    <source>
    </source>
</evidence>
<evidence type="ECO:0007744" key="11">
    <source>
    </source>
</evidence>
<sequence length="489" mass="55468">MSSQFPSSPYRTVDPYSPPNYKQQPNCPSSNYEKAGKTASESIGNFGKGDYPTPFPSSSIGRVSSPVRSNKVDAIPSSPAFPGQLAETSPKFSSKLSSPSRHTRVINAELDPSKISTITVGRNSSQCDVALCKNKFISRVHASITYLPQTNEVKIHCFSMNGLIVTYRKQFDCYQLKDTMNNNNRAYRLVPRFSNEKCVKEIQDEGGFINFTLEEGDTVYMTYYKGIMLDFRQVLLRISLKEKNSSSEPLRFEKKAEFESESETKHMGSIRKHPLIFTDTSMDRPKKILKDSNKISIGSDSGVAERMLNHFLNSKSSPLSSVSSVDHEEQTLRQDSLSSDKNPMTMKKPKLNKRVLPSKPKKSVKENLDELSRRNIDVMHLQHILTNHLAFANVQQTPLFQLQQVNSQISELSRDELRSILSDAKCVGVIYRHGKDAAGKPLDEEYFYDLENDDDYERRNLVSSLKGGRTGLRSCRRTHKQYFWKKPAK</sequence>
<feature type="chain" id="PRO_0000262748" description="Protein TOS4">
    <location>
        <begin position="1"/>
        <end position="489"/>
    </location>
</feature>
<feature type="domain" description="FHA" evidence="1">
    <location>
        <begin position="118"/>
        <end position="170"/>
    </location>
</feature>
<feature type="region of interest" description="Disordered" evidence="2">
    <location>
        <begin position="1"/>
        <end position="101"/>
    </location>
</feature>
<feature type="region of interest" description="Disordered" evidence="2">
    <location>
        <begin position="316"/>
        <end position="366"/>
    </location>
</feature>
<feature type="compositionally biased region" description="Polar residues" evidence="2">
    <location>
        <begin position="1"/>
        <end position="10"/>
    </location>
</feature>
<feature type="compositionally biased region" description="Polar residues" evidence="2">
    <location>
        <begin position="20"/>
        <end position="32"/>
    </location>
</feature>
<feature type="compositionally biased region" description="Polar residues" evidence="2">
    <location>
        <begin position="56"/>
        <end position="68"/>
    </location>
</feature>
<feature type="compositionally biased region" description="Low complexity" evidence="2">
    <location>
        <begin position="89"/>
        <end position="100"/>
    </location>
</feature>
<feature type="compositionally biased region" description="Polar residues" evidence="2">
    <location>
        <begin position="333"/>
        <end position="342"/>
    </location>
</feature>
<feature type="modified residue" description="Phosphoserine" evidence="11">
    <location>
        <position position="40"/>
    </location>
</feature>
<feature type="modified residue" description="Phosphoserine" evidence="10">
    <location>
        <position position="100"/>
    </location>
</feature>
<gene>
    <name type="primary">TOS4</name>
    <name type="ordered locus">YLR183C</name>
    <name type="ORF">L94705.22</name>
</gene>
<organism>
    <name type="scientific">Saccharomyces cerevisiae (strain ATCC 204508 / S288c)</name>
    <name type="common">Baker's yeast</name>
    <dbReference type="NCBI Taxonomy" id="559292"/>
    <lineage>
        <taxon>Eukaryota</taxon>
        <taxon>Fungi</taxon>
        <taxon>Dikarya</taxon>
        <taxon>Ascomycota</taxon>
        <taxon>Saccharomycotina</taxon>
        <taxon>Saccharomycetes</taxon>
        <taxon>Saccharomycetales</taxon>
        <taxon>Saccharomycetaceae</taxon>
        <taxon>Saccharomyces</taxon>
    </lineage>
</organism>
<proteinExistence type="evidence at protein level"/>